<sequence length="168" mass="19220">MEYYNVGKIVNTHGVRGEVRVLATTDFIDERFAKGNTLYLQQSGEPLPLTIESTRQHKGFVLVKFVGYDNINDVEQFRDHELMVSADDQQPLDDGQYYYHQIIGLDVETTDGRHLGKIKEILSPGANDVWVVERPEKRDLLLPVIDEVVKNVDLDKNFVTVELMEGLE</sequence>
<dbReference type="EMBL" id="CP000705">
    <property type="protein sequence ID" value="ABQ83409.1"/>
    <property type="molecule type" value="Genomic_DNA"/>
</dbReference>
<dbReference type="RefSeq" id="WP_003668365.1">
    <property type="nucleotide sequence ID" value="NC_009513.1"/>
</dbReference>
<dbReference type="SMR" id="A5VKN5"/>
<dbReference type="STRING" id="557436.Lreu_1152"/>
<dbReference type="KEGG" id="lre:Lreu_1152"/>
<dbReference type="PATRIC" id="fig|557436.17.peg.18"/>
<dbReference type="eggNOG" id="COG0806">
    <property type="taxonomic scope" value="Bacteria"/>
</dbReference>
<dbReference type="HOGENOM" id="CLU_077636_3_1_9"/>
<dbReference type="Proteomes" id="UP000001991">
    <property type="component" value="Chromosome"/>
</dbReference>
<dbReference type="GO" id="GO:0005737">
    <property type="term" value="C:cytoplasm"/>
    <property type="evidence" value="ECO:0007669"/>
    <property type="project" value="UniProtKB-SubCell"/>
</dbReference>
<dbReference type="GO" id="GO:0005840">
    <property type="term" value="C:ribosome"/>
    <property type="evidence" value="ECO:0007669"/>
    <property type="project" value="InterPro"/>
</dbReference>
<dbReference type="GO" id="GO:0043022">
    <property type="term" value="F:ribosome binding"/>
    <property type="evidence" value="ECO:0007669"/>
    <property type="project" value="InterPro"/>
</dbReference>
<dbReference type="GO" id="GO:0042274">
    <property type="term" value="P:ribosomal small subunit biogenesis"/>
    <property type="evidence" value="ECO:0007669"/>
    <property type="project" value="UniProtKB-UniRule"/>
</dbReference>
<dbReference type="GO" id="GO:0006364">
    <property type="term" value="P:rRNA processing"/>
    <property type="evidence" value="ECO:0007669"/>
    <property type="project" value="UniProtKB-UniRule"/>
</dbReference>
<dbReference type="Gene3D" id="2.30.30.240">
    <property type="entry name" value="PRC-barrel domain"/>
    <property type="match status" value="1"/>
</dbReference>
<dbReference type="Gene3D" id="2.40.30.60">
    <property type="entry name" value="RimM"/>
    <property type="match status" value="1"/>
</dbReference>
<dbReference type="HAMAP" id="MF_00014">
    <property type="entry name" value="Ribosome_mat_RimM"/>
    <property type="match status" value="1"/>
</dbReference>
<dbReference type="InterPro" id="IPR027275">
    <property type="entry name" value="PRC-brl_dom"/>
</dbReference>
<dbReference type="InterPro" id="IPR011033">
    <property type="entry name" value="PRC_barrel-like_sf"/>
</dbReference>
<dbReference type="InterPro" id="IPR011961">
    <property type="entry name" value="RimM"/>
</dbReference>
<dbReference type="InterPro" id="IPR002676">
    <property type="entry name" value="RimM_N"/>
</dbReference>
<dbReference type="InterPro" id="IPR036976">
    <property type="entry name" value="RimM_N_sf"/>
</dbReference>
<dbReference type="InterPro" id="IPR009000">
    <property type="entry name" value="Transl_B-barrel_sf"/>
</dbReference>
<dbReference type="NCBIfam" id="TIGR02273">
    <property type="entry name" value="16S_RimM"/>
    <property type="match status" value="1"/>
</dbReference>
<dbReference type="PANTHER" id="PTHR33692">
    <property type="entry name" value="RIBOSOME MATURATION FACTOR RIMM"/>
    <property type="match status" value="1"/>
</dbReference>
<dbReference type="PANTHER" id="PTHR33692:SF1">
    <property type="entry name" value="RIBOSOME MATURATION FACTOR RIMM"/>
    <property type="match status" value="1"/>
</dbReference>
<dbReference type="Pfam" id="PF05239">
    <property type="entry name" value="PRC"/>
    <property type="match status" value="1"/>
</dbReference>
<dbReference type="Pfam" id="PF01782">
    <property type="entry name" value="RimM"/>
    <property type="match status" value="1"/>
</dbReference>
<dbReference type="SUPFAM" id="SSF50346">
    <property type="entry name" value="PRC-barrel domain"/>
    <property type="match status" value="1"/>
</dbReference>
<dbReference type="SUPFAM" id="SSF50447">
    <property type="entry name" value="Translation proteins"/>
    <property type="match status" value="1"/>
</dbReference>
<comment type="function">
    <text evidence="1">An accessory protein needed during the final step in the assembly of 30S ribosomal subunit, possibly for assembly of the head region. Essential for efficient processing of 16S rRNA. May be needed both before and after RbfA during the maturation of 16S rRNA. It has affinity for free ribosomal 30S subunits but not for 70S ribosomes.</text>
</comment>
<comment type="subunit">
    <text evidence="1">Binds ribosomal protein uS19.</text>
</comment>
<comment type="subcellular location">
    <subcellularLocation>
        <location evidence="1">Cytoplasm</location>
    </subcellularLocation>
</comment>
<comment type="domain">
    <text evidence="1">The PRC barrel domain binds ribosomal protein uS19.</text>
</comment>
<comment type="similarity">
    <text evidence="1">Belongs to the RimM family.</text>
</comment>
<keyword id="KW-0143">Chaperone</keyword>
<keyword id="KW-0963">Cytoplasm</keyword>
<keyword id="KW-1185">Reference proteome</keyword>
<keyword id="KW-0690">Ribosome biogenesis</keyword>
<keyword id="KW-0698">rRNA processing</keyword>
<accession>A5VKN5</accession>
<gene>
    <name evidence="1" type="primary">rimM</name>
    <name type="ordered locus">Lreu_1152</name>
</gene>
<protein>
    <recommendedName>
        <fullName evidence="1">Ribosome maturation factor RimM</fullName>
    </recommendedName>
</protein>
<name>RIMM_LIMRD</name>
<evidence type="ECO:0000255" key="1">
    <source>
        <dbReference type="HAMAP-Rule" id="MF_00014"/>
    </source>
</evidence>
<feature type="chain" id="PRO_1000057118" description="Ribosome maturation factor RimM">
    <location>
        <begin position="1"/>
        <end position="168"/>
    </location>
</feature>
<feature type="domain" description="PRC barrel" evidence="1">
    <location>
        <begin position="94"/>
        <end position="167"/>
    </location>
</feature>
<proteinExistence type="inferred from homology"/>
<reference key="1">
    <citation type="journal article" date="2011" name="PLoS Genet.">
        <title>The evolution of host specialization in the vertebrate gut symbiont Lactobacillus reuteri.</title>
        <authorList>
            <person name="Frese S.A."/>
            <person name="Benson A.K."/>
            <person name="Tannock G.W."/>
            <person name="Loach D.M."/>
            <person name="Kim J."/>
            <person name="Zhang M."/>
            <person name="Oh P.L."/>
            <person name="Heng N.C."/>
            <person name="Patil P.B."/>
            <person name="Juge N."/>
            <person name="Mackenzie D.A."/>
            <person name="Pearson B.M."/>
            <person name="Lapidus A."/>
            <person name="Dalin E."/>
            <person name="Tice H."/>
            <person name="Goltsman E."/>
            <person name="Land M."/>
            <person name="Hauser L."/>
            <person name="Ivanova N."/>
            <person name="Kyrpides N.C."/>
            <person name="Walter J."/>
        </authorList>
    </citation>
    <scope>NUCLEOTIDE SEQUENCE [LARGE SCALE GENOMIC DNA]</scope>
    <source>
        <strain>DSM 20016</strain>
    </source>
</reference>
<organism>
    <name type="scientific">Limosilactobacillus reuteri (strain DSM 20016)</name>
    <name type="common">Lactobacillus reuteri</name>
    <dbReference type="NCBI Taxonomy" id="557436"/>
    <lineage>
        <taxon>Bacteria</taxon>
        <taxon>Bacillati</taxon>
        <taxon>Bacillota</taxon>
        <taxon>Bacilli</taxon>
        <taxon>Lactobacillales</taxon>
        <taxon>Lactobacillaceae</taxon>
        <taxon>Limosilactobacillus</taxon>
    </lineage>
</organism>